<gene>
    <name type="primary">Ptpn13</name>
    <name type="synonym">Ptp14</name>
</gene>
<evidence type="ECO:0000250" key="1"/>
<evidence type="ECO:0000250" key="2">
    <source>
        <dbReference type="UniProtKB" id="Q12923"/>
    </source>
</evidence>
<evidence type="ECO:0000255" key="3"/>
<evidence type="ECO:0000255" key="4">
    <source>
        <dbReference type="PROSITE-ProRule" id="PRU00084"/>
    </source>
</evidence>
<evidence type="ECO:0000255" key="5">
    <source>
        <dbReference type="PROSITE-ProRule" id="PRU00143"/>
    </source>
</evidence>
<evidence type="ECO:0000255" key="6">
    <source>
        <dbReference type="PROSITE-ProRule" id="PRU00160"/>
    </source>
</evidence>
<evidence type="ECO:0000255" key="7">
    <source>
        <dbReference type="PROSITE-ProRule" id="PRU00709"/>
    </source>
</evidence>
<evidence type="ECO:0000256" key="8">
    <source>
        <dbReference type="SAM" id="MobiDB-lite"/>
    </source>
</evidence>
<evidence type="ECO:0000269" key="9">
    <source>
    </source>
</evidence>
<evidence type="ECO:0000269" key="10">
    <source>
    </source>
</evidence>
<evidence type="ECO:0000269" key="11">
    <source>
    </source>
</evidence>
<evidence type="ECO:0000269" key="12">
    <source>
    </source>
</evidence>
<evidence type="ECO:0000269" key="13">
    <source>
    </source>
</evidence>
<evidence type="ECO:0000305" key="14"/>
<evidence type="ECO:0007744" key="15">
    <source>
    </source>
</evidence>
<evidence type="ECO:0007829" key="16">
    <source>
        <dbReference type="PDB" id="1GM1"/>
    </source>
</evidence>
<evidence type="ECO:0007829" key="17">
    <source>
        <dbReference type="PDB" id="1OZI"/>
    </source>
</evidence>
<evidence type="ECO:0007829" key="18">
    <source>
        <dbReference type="PDB" id="6GBD"/>
    </source>
</evidence>
<evidence type="ECO:0007829" key="19">
    <source>
        <dbReference type="PDB" id="6GBE"/>
    </source>
</evidence>
<accession>Q64512</accession>
<accession>Q61494</accession>
<accession>Q62135</accession>
<accession>Q64499</accession>
<organism>
    <name type="scientific">Mus musculus</name>
    <name type="common">Mouse</name>
    <dbReference type="NCBI Taxonomy" id="10090"/>
    <lineage>
        <taxon>Eukaryota</taxon>
        <taxon>Metazoa</taxon>
        <taxon>Chordata</taxon>
        <taxon>Craniata</taxon>
        <taxon>Vertebrata</taxon>
        <taxon>Euteleostomi</taxon>
        <taxon>Mammalia</taxon>
        <taxon>Eutheria</taxon>
        <taxon>Euarchontoglires</taxon>
        <taxon>Glires</taxon>
        <taxon>Rodentia</taxon>
        <taxon>Myomorpha</taxon>
        <taxon>Muroidea</taxon>
        <taxon>Muridae</taxon>
        <taxon>Murinae</taxon>
        <taxon>Mus</taxon>
        <taxon>Mus</taxon>
    </lineage>
</organism>
<reference key="1">
    <citation type="journal article" date="1995" name="J. Cell. Biochem.">
        <title>Molecular cloning of a mouse epithelial protein-tyrosine phosphatase with similarities to submembranous proteins.</title>
        <authorList>
            <person name="Hendriks W."/>
            <person name="Schepens J."/>
            <person name="Baechner D."/>
            <person name="Rijss J."/>
            <person name="Zeeuwen P."/>
            <person name="Zechner U."/>
            <person name="Hameister H."/>
            <person name="Wieringa B."/>
        </authorList>
    </citation>
    <scope>NUCLEOTIDE SEQUENCE [MRNA]</scope>
    <source>
        <strain>C57BL/6J</strain>
        <tissue>Skin</tissue>
    </source>
</reference>
<reference key="2">
    <citation type="journal article" date="1995" name="FEBS Lett.">
        <title>Characterization of a protein tyrosine phosphatase (RIP) expressed at a very early stage of differentiation in both mouse erythroleukemia and embryonal carcinoma cells.</title>
        <authorList>
            <person name="Chida D."/>
            <person name="Kume T."/>
            <person name="Mukouyama Y."/>
            <person name="Tabata S."/>
            <person name="Nomura N."/>
            <person name="Thomas M."/>
            <person name="Watanabe T."/>
            <person name="Oishi M."/>
        </authorList>
    </citation>
    <scope>NUCLEOTIDE SEQUENCE [MRNA]</scope>
    <source>
        <strain>DBA/2J</strain>
    </source>
</reference>
<reference key="3">
    <citation type="journal article" date="1994" name="Biochem. Biophys. Res. Commun.">
        <title>cDNA cloning of a novel protein tyrosine phosphatase with homology to cytoskeletal protein 4.1 and its expression in T-lineage cells.</title>
        <authorList>
            <person name="Sawada M."/>
            <person name="Ogata M."/>
            <person name="Fujino Y."/>
            <person name="Hamaoka T."/>
        </authorList>
    </citation>
    <scope>NUCLEOTIDE SEQUENCE [MRNA] OF 1105-2452</scope>
    <source>
        <strain>CB.17 SCID</strain>
        <tissue>Thymus</tissue>
    </source>
</reference>
<reference key="4">
    <citation type="journal article" date="1995" name="Biochem. J.">
        <title>A novel receptor-type protein tyrosine phosphatase with a single catalytic domain is specifically expressed in mouse brain.</title>
        <authorList>
            <person name="Hendriks W."/>
            <person name="Schepens J."/>
            <person name="Brugman C."/>
            <person name="Zeeuwen P."/>
            <person name="Wieringa B."/>
        </authorList>
    </citation>
    <scope>NUCLEOTIDE SEQUENCE [MRNA] OF 2267-2373</scope>
    <source>
        <strain>BALB/cJ</strain>
        <tissue>Brain</tissue>
    </source>
</reference>
<reference key="5">
    <citation type="journal article" date="1998" name="Mol. Biol. Cell">
        <title>PDZ motifs in PTP-BL and RIL bind to internal protein segments in the LIM domain protein RIL.</title>
        <authorList>
            <person name="Cuppen E."/>
            <person name="Gerrits H."/>
            <person name="Pepers B."/>
            <person name="Wieringa B."/>
            <person name="Hendriks W."/>
        </authorList>
    </citation>
    <scope>INTERACTION WITH PDLIM4</scope>
</reference>
<reference key="6">
    <citation type="journal article" date="1999" name="FEBS Lett.">
        <title>Identification and molecular characterization of BP75, a novel bromodomain-containing protein.</title>
        <authorList>
            <person name="Cuppen E."/>
            <person name="van Ham M."/>
            <person name="Pepers B."/>
            <person name="Wieringa B."/>
            <person name="Hendriks W."/>
        </authorList>
    </citation>
    <scope>INTERACTION WITH BRD7</scope>
</reference>
<reference key="7">
    <citation type="journal article" date="2000" name="Eur. J. Cell Biol.">
        <title>The zyxin-related protein TRIP6 interacts with PDZ motifs in the adaptor protein RIL and the protein tyrosine phosphatase PTP-BL.</title>
        <authorList>
            <person name="Cuppen E."/>
            <person name="van Ham M."/>
            <person name="Wansink D.G."/>
            <person name="de Leeuw A."/>
            <person name="Wieringa B."/>
            <person name="Hendriks W."/>
        </authorList>
    </citation>
    <scope>INTERACTION WITH PDLIM4 AND TRIP6</scope>
</reference>
<reference key="8">
    <citation type="journal article" date="2004" name="Mol. Biol. Rep.">
        <title>The interaction of PTP-BL PDZ domains with RIL: an enigmatic role for the RIL LIM domain.</title>
        <authorList>
            <person name="van den Berk L.C."/>
            <person name="van Ham M.A."/>
            <person name="te Lindert M.M."/>
            <person name="Walma T."/>
            <person name="Aelen J."/>
            <person name="Vuister G.W."/>
            <person name="Hendriks W.J."/>
        </authorList>
    </citation>
    <scope>INTERACTION WITH PDLIM4</scope>
</reference>
<reference key="9">
    <citation type="journal article" date="2010" name="Cell">
        <title>A tissue-specific atlas of mouse protein phosphorylation and expression.</title>
        <authorList>
            <person name="Huttlin E.L."/>
            <person name="Jedrychowski M.P."/>
            <person name="Elias J.E."/>
            <person name="Goswami T."/>
            <person name="Rad R."/>
            <person name="Beausoleil S.A."/>
            <person name="Villen J."/>
            <person name="Haas W."/>
            <person name="Sowa M.E."/>
            <person name="Gygi S.P."/>
        </authorList>
    </citation>
    <scope>PHOSPHORYLATION [LARGE SCALE ANALYSIS] AT SER-240; SER-297; SER-298; SER-883; SER-890; SER-901; SER-904; SER-907; SER-1221 AND SER-1270</scope>
    <scope>IDENTIFICATION BY MASS SPECTROMETRY [LARGE SCALE ANALYSIS]</scope>
    <source>
        <tissue>Brain</tissue>
        <tissue>Kidney</tissue>
        <tissue>Lung</tissue>
        <tissue>Pancreas</tissue>
        <tissue>Spleen</tissue>
    </source>
</reference>
<reference key="10">
    <citation type="journal article" date="2013" name="Oncogene">
        <title>The serologically defined colon cancer antigen-3 interacts with the protein tyrosine phosphatase PTPN13 and is involved in the regulation of cytokinesis.</title>
        <authorList>
            <person name="Hagemann N."/>
            <person name="Ackermann N."/>
            <person name="Christmann J."/>
            <person name="Brier S."/>
            <person name="Yu F."/>
            <person name="Erdmann K.S."/>
        </authorList>
    </citation>
    <scope>IDENTIFICATION IN A COMPLEX WITH ENTR1 AND GIT1</scope>
    <scope>INTERACTION WITH ENTR1</scope>
</reference>
<feature type="chain" id="PRO_0000219436" description="Tyrosine-protein phosphatase non-receptor type 13">
    <location>
        <begin position="1"/>
        <end position="2453"/>
    </location>
</feature>
<feature type="domain" description="KIND" evidence="7">
    <location>
        <begin position="3"/>
        <end position="190"/>
    </location>
</feature>
<feature type="domain" description="FERM" evidence="4">
    <location>
        <begin position="565"/>
        <end position="865"/>
    </location>
</feature>
<feature type="domain" description="PDZ 1" evidence="5">
    <location>
        <begin position="1084"/>
        <end position="1170"/>
    </location>
</feature>
<feature type="domain" description="PDZ 2" evidence="5">
    <location>
        <begin position="1357"/>
        <end position="1442"/>
    </location>
</feature>
<feature type="domain" description="PDZ 3" evidence="5">
    <location>
        <begin position="1491"/>
        <end position="1579"/>
    </location>
</feature>
<feature type="domain" description="PDZ 4" evidence="5">
    <location>
        <begin position="1764"/>
        <end position="1845"/>
    </location>
</feature>
<feature type="domain" description="PDZ 5" evidence="5">
    <location>
        <begin position="1857"/>
        <end position="1942"/>
    </location>
</feature>
<feature type="domain" description="Tyrosine-protein phosphatase" evidence="6">
    <location>
        <begin position="2180"/>
        <end position="2434"/>
    </location>
</feature>
<feature type="region of interest" description="Disordered" evidence="8">
    <location>
        <begin position="183"/>
        <end position="227"/>
    </location>
</feature>
<feature type="region of interest" description="Disordered" evidence="8">
    <location>
        <begin position="253"/>
        <end position="285"/>
    </location>
</feature>
<feature type="region of interest" description="Disordered" evidence="8">
    <location>
        <begin position="429"/>
        <end position="457"/>
    </location>
</feature>
<feature type="region of interest" description="Disordered" evidence="8">
    <location>
        <begin position="944"/>
        <end position="966"/>
    </location>
</feature>
<feature type="region of interest" description="Disordered" evidence="8">
    <location>
        <begin position="1007"/>
        <end position="1063"/>
    </location>
</feature>
<feature type="region of interest" description="Disordered" evidence="8">
    <location>
        <begin position="1199"/>
        <end position="1356"/>
    </location>
</feature>
<feature type="region of interest" description="Disordered" evidence="8">
    <location>
        <begin position="1441"/>
        <end position="1478"/>
    </location>
</feature>
<feature type="region of interest" description="Disordered" evidence="8">
    <location>
        <begin position="1602"/>
        <end position="1662"/>
    </location>
</feature>
<feature type="region of interest" description="Disordered" evidence="8">
    <location>
        <begin position="1695"/>
        <end position="1726"/>
    </location>
</feature>
<feature type="region of interest" description="Disordered" evidence="8">
    <location>
        <begin position="1991"/>
        <end position="2024"/>
    </location>
</feature>
<feature type="region of interest" description="Disordered" evidence="8">
    <location>
        <begin position="2051"/>
        <end position="2139"/>
    </location>
</feature>
<feature type="coiled-coil region" evidence="3">
    <location>
        <begin position="458"/>
        <end position="493"/>
    </location>
</feature>
<feature type="compositionally biased region" description="Basic and acidic residues" evidence="8">
    <location>
        <begin position="190"/>
        <end position="205"/>
    </location>
</feature>
<feature type="compositionally biased region" description="Basic and acidic residues" evidence="8">
    <location>
        <begin position="256"/>
        <end position="270"/>
    </location>
</feature>
<feature type="compositionally biased region" description="Polar residues" evidence="8">
    <location>
        <begin position="272"/>
        <end position="285"/>
    </location>
</feature>
<feature type="compositionally biased region" description="Polar residues" evidence="8">
    <location>
        <begin position="447"/>
        <end position="457"/>
    </location>
</feature>
<feature type="compositionally biased region" description="Basic and acidic residues" evidence="8">
    <location>
        <begin position="944"/>
        <end position="957"/>
    </location>
</feature>
<feature type="compositionally biased region" description="Basic and acidic residues" evidence="8">
    <location>
        <begin position="1025"/>
        <end position="1034"/>
    </location>
</feature>
<feature type="compositionally biased region" description="Low complexity" evidence="8">
    <location>
        <begin position="1049"/>
        <end position="1058"/>
    </location>
</feature>
<feature type="compositionally biased region" description="Polar residues" evidence="8">
    <location>
        <begin position="1242"/>
        <end position="1252"/>
    </location>
</feature>
<feature type="compositionally biased region" description="Polar residues" evidence="8">
    <location>
        <begin position="1267"/>
        <end position="1279"/>
    </location>
</feature>
<feature type="compositionally biased region" description="Basic and acidic residues" evidence="8">
    <location>
        <begin position="1297"/>
        <end position="1315"/>
    </location>
</feature>
<feature type="compositionally biased region" description="Low complexity" evidence="8">
    <location>
        <begin position="1331"/>
        <end position="1341"/>
    </location>
</feature>
<feature type="compositionally biased region" description="Basic and acidic residues" evidence="8">
    <location>
        <begin position="1467"/>
        <end position="1478"/>
    </location>
</feature>
<feature type="compositionally biased region" description="Polar residues" evidence="8">
    <location>
        <begin position="1602"/>
        <end position="1629"/>
    </location>
</feature>
<feature type="compositionally biased region" description="Basic and acidic residues" evidence="8">
    <location>
        <begin position="1638"/>
        <end position="1655"/>
    </location>
</feature>
<feature type="compositionally biased region" description="Basic and acidic residues" evidence="8">
    <location>
        <begin position="2012"/>
        <end position="2021"/>
    </location>
</feature>
<feature type="active site" description="Phosphocysteine intermediate" evidence="6">
    <location>
        <position position="2375"/>
    </location>
</feature>
<feature type="binding site" evidence="1">
    <location>
        <position position="2345"/>
    </location>
    <ligand>
        <name>substrate</name>
    </ligand>
</feature>
<feature type="binding site" evidence="1">
    <location>
        <begin position="2375"/>
        <end position="2381"/>
    </location>
    <ligand>
        <name>substrate</name>
    </ligand>
</feature>
<feature type="binding site" evidence="1">
    <location>
        <position position="2419"/>
    </location>
    <ligand>
        <name>substrate</name>
    </ligand>
</feature>
<feature type="modified residue" description="Phosphoserine" evidence="15">
    <location>
        <position position="240"/>
    </location>
</feature>
<feature type="modified residue" description="Phosphoserine" evidence="15">
    <location>
        <position position="297"/>
    </location>
</feature>
<feature type="modified residue" description="Phosphoserine" evidence="15">
    <location>
        <position position="298"/>
    </location>
</feature>
<feature type="modified residue" description="Phosphoserine" evidence="15">
    <location>
        <position position="883"/>
    </location>
</feature>
<feature type="modified residue" description="Phosphoserine" evidence="15">
    <location>
        <position position="890"/>
    </location>
</feature>
<feature type="modified residue" description="Phosphoserine" evidence="15">
    <location>
        <position position="901"/>
    </location>
</feature>
<feature type="modified residue" description="Phosphoserine" evidence="15">
    <location>
        <position position="904"/>
    </location>
</feature>
<feature type="modified residue" description="Phosphoserine" evidence="15">
    <location>
        <position position="907"/>
    </location>
</feature>
<feature type="modified residue" description="Phosphoserine" evidence="2">
    <location>
        <position position="1021"/>
    </location>
</feature>
<feature type="modified residue" description="Phosphoserine" evidence="2">
    <location>
        <position position="1025"/>
    </location>
</feature>
<feature type="modified residue" description="Phosphoserine" evidence="2">
    <location>
        <position position="1076"/>
    </location>
</feature>
<feature type="modified residue" description="Phosphoserine" evidence="15">
    <location>
        <position position="1221"/>
    </location>
</feature>
<feature type="modified residue" description="Phosphoserine" evidence="15">
    <location>
        <position position="1270"/>
    </location>
</feature>
<feature type="sequence conflict" description="In Ref. 2; BAA12158." evidence="14" ref="2">
    <original>STA</original>
    <variation>FTG</variation>
    <location>
        <begin position="79"/>
        <end position="81"/>
    </location>
</feature>
<feature type="sequence conflict" description="In Ref. 2." evidence="14" ref="2">
    <original>HIRNSNCAPSFSN</original>
    <variation>TSGTASRAFVSY</variation>
    <location>
        <begin position="156"/>
        <end position="168"/>
    </location>
</feature>
<feature type="sequence conflict" description="In Ref. 2; BAA12158." evidence="14" ref="2">
    <original>V</original>
    <variation>L</variation>
    <location>
        <position position="233"/>
    </location>
</feature>
<feature type="sequence conflict" description="In Ref. 2; BAA12158." evidence="14" ref="2">
    <original>N</original>
    <variation>I</variation>
    <location>
        <position position="306"/>
    </location>
</feature>
<feature type="sequence conflict" description="In Ref. 2; BAA12158." evidence="14" ref="2">
    <original>K</original>
    <variation>E</variation>
    <location>
        <position position="322"/>
    </location>
</feature>
<feature type="sequence conflict" description="In Ref. 2; BAA12158." evidence="14" ref="2">
    <original>Q</original>
    <variation>K</variation>
    <location>
        <position position="381"/>
    </location>
</feature>
<feature type="sequence conflict" description="In Ref. 2; BAA12158." evidence="14" ref="2">
    <original>S</original>
    <variation>L</variation>
    <location>
        <position position="822"/>
    </location>
</feature>
<feature type="sequence conflict" description="In Ref. 3; BAA05885." evidence="14" ref="3">
    <original>S</original>
    <variation>T</variation>
    <location>
        <position position="1233"/>
    </location>
</feature>
<feature type="sequence conflict" description="In Ref. 2; BAA12158." evidence="14" ref="2">
    <original>R</original>
    <variation>Q</variation>
    <location>
        <position position="1449"/>
    </location>
</feature>
<feature type="sequence conflict" description="In Ref. 1; CAA83650." evidence="14" ref="1">
    <original>QTPHVKDYSFVTEDNT</original>
    <variation>KHPMSKTTALLLKII</variation>
    <location>
        <begin position="1474"/>
        <end position="1489"/>
    </location>
</feature>
<feature type="sequence conflict" description="In Ref. 2; BAA12158." evidence="14" ref="2">
    <original>D</original>
    <variation>H</variation>
    <location>
        <position position="1622"/>
    </location>
</feature>
<feature type="sequence conflict" description="In Ref. 1; CAA83650." evidence="14" ref="1">
    <original>S</original>
    <variation>P</variation>
    <location>
        <position position="1872"/>
    </location>
</feature>
<feature type="sequence conflict" description="In Ref. 3; BAA05885." evidence="14" ref="3">
    <original>N</original>
    <variation>I</variation>
    <location>
        <position position="1979"/>
    </location>
</feature>
<feature type="sequence conflict" description="In Ref. 2; BAA12158." evidence="14" ref="2">
    <original>D</original>
    <variation>N</variation>
    <location>
        <position position="2078"/>
    </location>
</feature>
<feature type="sequence conflict" description="In Ref. 2; BAA12158." evidence="14" ref="2">
    <original>S</original>
    <variation>T</variation>
    <location>
        <position position="2233"/>
    </location>
</feature>
<feature type="sequence conflict" description="In Ref. 1; CAA83650." evidence="14" ref="1">
    <original>PGLPQ</original>
    <variation>GSHSDAEQPPKAPP</variation>
    <location>
        <begin position="2448"/>
        <end position="2452"/>
    </location>
</feature>
<feature type="strand" evidence="16">
    <location>
        <begin position="1354"/>
        <end position="1361"/>
    </location>
</feature>
<feature type="strand" evidence="17">
    <location>
        <begin position="1364"/>
        <end position="1366"/>
    </location>
</feature>
<feature type="strand" evidence="16">
    <location>
        <begin position="1369"/>
        <end position="1378"/>
    </location>
</feature>
<feature type="strand" evidence="16">
    <location>
        <begin position="1383"/>
        <end position="1389"/>
    </location>
</feature>
<feature type="strand" evidence="17">
    <location>
        <begin position="1391"/>
        <end position="1393"/>
    </location>
</feature>
<feature type="helix" evidence="16">
    <location>
        <begin position="1394"/>
        <end position="1398"/>
    </location>
</feature>
<feature type="strand" evidence="16">
    <location>
        <begin position="1406"/>
        <end position="1410"/>
    </location>
</feature>
<feature type="helix" evidence="16">
    <location>
        <begin position="1420"/>
        <end position="1428"/>
    </location>
</feature>
<feature type="strand" evidence="16">
    <location>
        <begin position="1432"/>
        <end position="1440"/>
    </location>
</feature>
<feature type="strand" evidence="18">
    <location>
        <begin position="1482"/>
        <end position="1485"/>
    </location>
</feature>
<feature type="strand" evidence="18">
    <location>
        <begin position="1490"/>
        <end position="1495"/>
    </location>
</feature>
<feature type="strand" evidence="18">
    <location>
        <begin position="1505"/>
        <end position="1507"/>
    </location>
</feature>
<feature type="strand" evidence="18">
    <location>
        <begin position="1521"/>
        <end position="1523"/>
    </location>
</feature>
<feature type="helix" evidence="18">
    <location>
        <begin position="1531"/>
        <end position="1534"/>
    </location>
</feature>
<feature type="strand" evidence="18">
    <location>
        <begin position="1535"/>
        <end position="1537"/>
    </location>
</feature>
<feature type="strand" evidence="18">
    <location>
        <begin position="1543"/>
        <end position="1549"/>
    </location>
</feature>
<feature type="strand" evidence="19">
    <location>
        <begin position="1552"/>
        <end position="1554"/>
    </location>
</feature>
<feature type="helix" evidence="18">
    <location>
        <begin position="1557"/>
        <end position="1563"/>
    </location>
</feature>
<feature type="strand" evidence="18">
    <location>
        <begin position="1567"/>
        <end position="1576"/>
    </location>
</feature>
<comment type="function">
    <text evidence="2">Tyrosine phosphatase which negatively regulates FAS-induced apoptosis and NGFR-mediated pro-apoptotic signaling. May regulate phosphoinositide 3-kinase (PI3K) signaling through dephosphorylation of PIK3R2.</text>
</comment>
<comment type="catalytic activity">
    <reaction evidence="2">
        <text>O-phospho-L-tyrosyl-[protein] + H2O = L-tyrosyl-[protein] + phosphate</text>
        <dbReference type="Rhea" id="RHEA:10684"/>
        <dbReference type="Rhea" id="RHEA-COMP:10136"/>
        <dbReference type="Rhea" id="RHEA-COMP:20101"/>
        <dbReference type="ChEBI" id="CHEBI:15377"/>
        <dbReference type="ChEBI" id="CHEBI:43474"/>
        <dbReference type="ChEBI" id="CHEBI:46858"/>
        <dbReference type="ChEBI" id="CHEBI:61978"/>
        <dbReference type="EC" id="3.1.3.48"/>
    </reaction>
</comment>
<comment type="subunit">
    <text evidence="2 9 10 11 12 13">Interacts (via the first PDZ domain) with PLEKHA1 and PLEKHA2. Interacts (via the second PDZ domain) with TNFRSF6 (Fas receptor) (via C-terminus) (By similarity). Interacts (via the second PDZ domain) with TRIP6 (via the third LIM domain and C-terminus) (PubMed:10826496). Interacts (via the third PDZ domain) with NGFR (via C-terminal SVP motif) and PKN2 (via C-terminus) (By similarity). Interacts (via the second or fourth PDZ domains) with PDLIM4 (via C-terminus only or via combined C-terminus and LIM domain, but not LIM domain only) (PubMed:15663004, PubMed:9487134). Found in a complex with PDLIM4 and TRIP6 (PubMed:10826496). Interacts with PDLIM4; this interaction results in dephosphorylation of SRC 'Tyr-419' by this protein leading to its inactivation (By similarity). Interacts with BRD7 (PubMed:10526152). Interacts with RAPGEF6. Interacts with ARHGAP29. Interacts with PIK3R2; dephosphorylates PIK3R2. Interacts with FBXL2 (By similarity). Interacts (via the FERM domain) with ENTR1 (PubMed:23108400). Found in a complex with ENTR1, PTPN13 and GIT1 (PubMed:23108400).</text>
</comment>
<comment type="interaction">
    <interactant intactId="EBI-4284057">
        <id>Q64512</id>
    </interactant>
    <interactant intactId="EBI-643930">
        <id>O88665</id>
        <label>Brd7</label>
    </interactant>
    <organismsDiffer>false</organismsDiffer>
    <experiments>3</experiments>
</comment>
<comment type="subcellular location">
    <subcellularLocation>
        <location evidence="2">Cytoplasm</location>
        <location evidence="2">Cytoskeleton</location>
    </subcellularLocation>
    <subcellularLocation>
        <location evidence="2">Nucleus</location>
    </subcellularLocation>
    <subcellularLocation>
        <location evidence="2">Cell projection</location>
        <location evidence="2">Lamellipodium</location>
    </subcellularLocation>
    <text evidence="2">Colocalizes with PKN2 in lamellipodia-like structure, regions of large actin turnover.</text>
</comment>
<comment type="tissue specificity">
    <text>Expressed predominantly in kidney and, to a lesser extent, in lung, heart, brain and testis.</text>
</comment>
<comment type="similarity">
    <text evidence="14">Belongs to the protein-tyrosine phosphatase family. Non-receptor class subfamily.</text>
</comment>
<sequence length="2453" mass="270334">MHVSLAEALEVRGGPLQEEEIWAVLNQSAESLQEVFRRVSIADPAALGFIISPWSLLLLPSGSVSFTDENVSNQDLRASTAPEVLQSHSLTSLADVEKIHIYSLGMTLYWGADHEVPQSQPIKLGDHLNSILLGMCEDVIYARVSVRTVLDACSAHIRNSNCAPSFSNVKQLVKLVLGNISGTDPLSRSSEQKPDRSQAIRDRLRGKGLPTGRSSTSDALDTHEAPLSQQTFVNKGLSKSMGFLSIRDTRDEEDYLKDTPSDNNSRHEDSETFSSPYQFKTSTPQMDALSKKKTWASSMDLLCAANRDISGETGRYQRCDPKTVTGRTSITPRKKEGRYSDGSIALDIFGPQKVEPVIHTRELPTSTAVSSALDRIRERQQKLQVLREAMNVEEPVRRYKTYHSDIFSISSESPSVISSESDFRQVRKSEASKRFESSSGLPGVDETGQTRPSRQYETSLEGNLINQDIMLRRQEEEMMQLQARMALRQSRLSLYPGDTVKASMLDISRDPLREMALETAMTQRKLRNFFGPEFVKMTVEPFVSLDLPRSILSQTKKGKSEDQRRKVNIRLLSGQRLELTCDTKTICKDVFDMVVAHIGLVEHHLFALATRKENEYFFVDPDLKLTKVAPEGWKEEPKRKGKAAVDFTLFFRIKFFMDDVSLIQHDLTCHQYYLQLRKDLLDERVHCDDEAALLLASLALQAEYGDYQPEVHGVSYFRLEHYLPARVMEKLDVSYIKEELPKLHNTYAGASEKETELEFLKVCQRLTEYGVHFHRVHPEKKSQTGILLGVCSKGVLVFEVHNGVRALVLRFPWRETKKISFSKKKITLQNTSDGIKHAFQTDSSKACQYLLHLCSSQHKFQLQMRARQSNQDAQDIERASFRSLNLQAESVRGFNMGRAISTGSLASSTINKLAVRPLSVQAEILKRLSSSEWSLYQPLQNSSKEKTDKASWEEKPRGMSKSYHDLSQASLCPHRKQVINMEALPQAFAELVGKPLYPMARSDTESLAGLPKLDNSKSVASLNRSPERRNHESDSSTEDPGQAYVVGMSLPSSGKSSSQVPFKDNDTLHKRWSIVSSPEREITLVNLKKDPKHGLGFQIIGGEKMGRLDLGVFISAVTPGGPADLDGCLKPGDRLISVNSVSLEGVSHHAAVDILQNAPEDVTLVISQPKEKPSKVPSTPVHFANGMKSYTKKPAYMQDSAMDPSEDQPWPRGTLRHIPESPFGLSGGLREGSLSSQDSRTESASLSQSQVNGFFASHLGDRGWQEPQHSSPSPSVTTKVNEKTFSDSNRSKAKRRGISDLIEHLDCADSDKDDSTYTSSQDHQTSKQEPSSSLSTSNKTSFPTSSASPPKPGDTFEVELAKTDGSLGISVTGGVNTSVRHGGIYVKAIIPKGAAESDGRIHKGDRVLAVNGVSLEGATHKQAVETLRNTGQVVHLLLEKGQVPTSRERDPAGPQSPPPDQDAQRQAPEKVAKQTPHVKDYSFVTEDNTFEVKLFKNSSGLGFSFSREDNLIPEQINGSIVRVKKLFPGQPAAESGKIDVGDVILKVNGAPLKGLSQQDVISALRGTAPEVSLLLCRPAPGVLPEIDTTFLNPLYSPANSFLNSSKETSQPSSSVEQGASSDDNGVSGKTKNHCRAPSRRESYSDHSESGEDDSVRAPAKMPNVTRVAAFPHEAPRSQEESICAMFYLPRKIPGKLESESSHPPPLDVSPGQTCQPPAECAPSDATGKHFTHLASQLSKEENITTLKNDLGNHLEDSELEVELLITLVKSEKGSLGFTVTKGSQSIGCYVHDVIQDPAKGDGRLKAGDRLIKVNDTDVTNMTHTDAVNLLRAAPKTVRLVLGRILELPRMPVFPHLLPDITVTCHGEELGFSLSGGQGSPHGVVYISDINPRSAAAVDGSLQLLDIIHYVNGVSTQGMTLEDANRALDLSLPSVVLKVTRDGCPVVPTTRAAISAPRFTKANGLTSMEPSGQPALMPKNSFSKVNGEGVHEAVCPAGEGSSSQMKESAGLTETKESNSRDDDIYDDPQEAEVIQSLLDVVDEEAQNLLNQRHATRRACSPDPLRTNGEAPEEGDTDYDGSPLPEDVPESVSSGEGKVDLASLTAASQEEKPIEEDATQESRNSTTETTDGEDSSKDPPFLTNEELAALPVVRVPPSGKYTGTQLQATIRTLQGLLDQGIPSKELENLQELKPLDQCLIGQTKENRRKNRYKNILPYDTTRVPLGDEGGYINASFIRIPVGTQEFVYIACQGPLPTTVGDFWQMVWEQNSTVIAMMTQEVEGEKIKCQRYWPSILGTTTMANERLRLALLRMQQLKGFIVRVMALEDIQTGEVRHISHLNFTAWPDHDTPSQPDDLLTFISYMRHIRRSGPVITHCSAGIGRSGTLICIDVVLGLISQDLEFDISDLVRCMRLQRHGMVQTEGQYVFCYQVILYVLTHLQAEEQKAQQPGLPQP</sequence>
<dbReference type="EC" id="3.1.3.48" evidence="2"/>
<dbReference type="EMBL" id="Z32740">
    <property type="protein sequence ID" value="CAA83650.1"/>
    <property type="molecule type" value="mRNA"/>
</dbReference>
<dbReference type="EMBL" id="D83966">
    <property type="protein sequence ID" value="BAA12158.1"/>
    <property type="molecule type" value="mRNA"/>
</dbReference>
<dbReference type="EMBL" id="D28529">
    <property type="protein sequence ID" value="BAA05885.1"/>
    <property type="molecule type" value="mRNA"/>
</dbReference>
<dbReference type="EMBL" id="Z23059">
    <property type="protein sequence ID" value="CAA80594.1"/>
    <property type="molecule type" value="mRNA"/>
</dbReference>
<dbReference type="PIR" id="S40290">
    <property type="entry name" value="S40290"/>
</dbReference>
<dbReference type="PIR" id="S71625">
    <property type="entry name" value="S71625"/>
</dbReference>
<dbReference type="RefSeq" id="NP_035334.2">
    <property type="nucleotide sequence ID" value="NM_011204.2"/>
</dbReference>
<dbReference type="PDB" id="1GM1">
    <property type="method" value="NMR"/>
    <property type="chains" value="A=1351-1444"/>
</dbReference>
<dbReference type="PDB" id="1OZI">
    <property type="method" value="NMR"/>
    <property type="chains" value="A=1351-1444"/>
</dbReference>
<dbReference type="PDB" id="1VJ6">
    <property type="method" value="NMR"/>
    <property type="chains" value="A=1351-1444"/>
</dbReference>
<dbReference type="PDB" id="6GBD">
    <property type="method" value="NMR"/>
    <property type="chains" value="A=1475-1588"/>
</dbReference>
<dbReference type="PDB" id="6GBE">
    <property type="method" value="NMR"/>
    <property type="chains" value="A=1475-1588"/>
</dbReference>
<dbReference type="PDBsum" id="1GM1"/>
<dbReference type="PDBsum" id="1OZI"/>
<dbReference type="PDBsum" id="1VJ6"/>
<dbReference type="PDBsum" id="6GBD"/>
<dbReference type="PDBsum" id="6GBE"/>
<dbReference type="SMR" id="Q64512"/>
<dbReference type="BioGRID" id="202479">
    <property type="interactions" value="33"/>
</dbReference>
<dbReference type="CORUM" id="Q64512"/>
<dbReference type="ELM" id="Q64512"/>
<dbReference type="FunCoup" id="Q64512">
    <property type="interactions" value="859"/>
</dbReference>
<dbReference type="IntAct" id="Q64512">
    <property type="interactions" value="9"/>
</dbReference>
<dbReference type="MINT" id="Q64512"/>
<dbReference type="STRING" id="10090.ENSMUSP00000048119"/>
<dbReference type="GlyGen" id="Q64512">
    <property type="glycosylation" value="5 sites, 2 N-linked glycans (2 sites), 1 O-linked glycan (1 site)"/>
</dbReference>
<dbReference type="iPTMnet" id="Q64512"/>
<dbReference type="PhosphoSitePlus" id="Q64512"/>
<dbReference type="jPOST" id="Q64512"/>
<dbReference type="PaxDb" id="10090-ENSMUSP00000048119"/>
<dbReference type="ProteomicsDB" id="301873"/>
<dbReference type="Pumba" id="Q64512"/>
<dbReference type="DNASU" id="19249"/>
<dbReference type="GeneID" id="19249"/>
<dbReference type="KEGG" id="mmu:19249"/>
<dbReference type="AGR" id="MGI:103293"/>
<dbReference type="CTD" id="5783"/>
<dbReference type="MGI" id="MGI:103293">
    <property type="gene designation" value="Ptpn13"/>
</dbReference>
<dbReference type="eggNOG" id="KOG0792">
    <property type="taxonomic scope" value="Eukaryota"/>
</dbReference>
<dbReference type="InParanoid" id="Q64512"/>
<dbReference type="OrthoDB" id="9937357at2759"/>
<dbReference type="PhylomeDB" id="Q64512"/>
<dbReference type="Reactome" id="R-MMU-1660499">
    <property type="pathway name" value="Synthesis of PIPs at the plasma membrane"/>
</dbReference>
<dbReference type="Reactome" id="R-MMU-9696264">
    <property type="pathway name" value="RND3 GTPase cycle"/>
</dbReference>
<dbReference type="Reactome" id="R-MMU-9696270">
    <property type="pathway name" value="RND2 GTPase cycle"/>
</dbReference>
<dbReference type="Reactome" id="R-MMU-9696273">
    <property type="pathway name" value="RND1 GTPase cycle"/>
</dbReference>
<dbReference type="BioGRID-ORCS" id="19249">
    <property type="hits" value="2 hits in 81 CRISPR screens"/>
</dbReference>
<dbReference type="ChiTaRS" id="Ptpn13">
    <property type="organism name" value="mouse"/>
</dbReference>
<dbReference type="EvolutionaryTrace" id="Q64512"/>
<dbReference type="PRO" id="PR:Q64512"/>
<dbReference type="Proteomes" id="UP000000589">
    <property type="component" value="Unplaced"/>
</dbReference>
<dbReference type="RNAct" id="Q64512">
    <property type="molecule type" value="protein"/>
</dbReference>
<dbReference type="GO" id="GO:0005737">
    <property type="term" value="C:cytoplasm"/>
    <property type="evidence" value="ECO:0000314"/>
    <property type="project" value="MGI"/>
</dbReference>
<dbReference type="GO" id="GO:0005856">
    <property type="term" value="C:cytoskeleton"/>
    <property type="evidence" value="ECO:0007669"/>
    <property type="project" value="UniProtKB-SubCell"/>
</dbReference>
<dbReference type="GO" id="GO:0030027">
    <property type="term" value="C:lamellipodium"/>
    <property type="evidence" value="ECO:0007669"/>
    <property type="project" value="UniProtKB-SubCell"/>
</dbReference>
<dbReference type="GO" id="GO:0030496">
    <property type="term" value="C:midbody"/>
    <property type="evidence" value="ECO:0000314"/>
    <property type="project" value="UniProtKB"/>
</dbReference>
<dbReference type="GO" id="GO:0005634">
    <property type="term" value="C:nucleus"/>
    <property type="evidence" value="ECO:0000314"/>
    <property type="project" value="MGI"/>
</dbReference>
<dbReference type="GO" id="GO:0004725">
    <property type="term" value="F:protein tyrosine phosphatase activity"/>
    <property type="evidence" value="ECO:0000250"/>
    <property type="project" value="UniProtKB"/>
</dbReference>
<dbReference type="GO" id="GO:0051896">
    <property type="term" value="P:regulation of phosphatidylinositol 3-kinase/protein kinase B signal transduction"/>
    <property type="evidence" value="ECO:0000250"/>
    <property type="project" value="UniProtKB"/>
</dbReference>
<dbReference type="CDD" id="cd14473">
    <property type="entry name" value="FERM_B-lobe"/>
    <property type="match status" value="1"/>
</dbReference>
<dbReference type="CDD" id="cd17195">
    <property type="entry name" value="FERM_F1_PTPN13"/>
    <property type="match status" value="1"/>
</dbReference>
<dbReference type="CDD" id="cd23072">
    <property type="entry name" value="PDZ1_PTPN13-like"/>
    <property type="match status" value="1"/>
</dbReference>
<dbReference type="CDD" id="cd06792">
    <property type="entry name" value="PDZ2-PTPN13_FRMPD2-like"/>
    <property type="match status" value="1"/>
</dbReference>
<dbReference type="CDD" id="cd06695">
    <property type="entry name" value="PDZ3_PTPN13_FRMPD2-like"/>
    <property type="match status" value="1"/>
</dbReference>
<dbReference type="CDD" id="cd06696">
    <property type="entry name" value="PDZ4_PTPN13-like"/>
    <property type="match status" value="1"/>
</dbReference>
<dbReference type="CDD" id="cd06697">
    <property type="entry name" value="PDZ5_PTPN13-like"/>
    <property type="match status" value="1"/>
</dbReference>
<dbReference type="CDD" id="cd14597">
    <property type="entry name" value="PTPc-N13"/>
    <property type="match status" value="1"/>
</dbReference>
<dbReference type="FunFam" id="1.10.510.10:FF:000242">
    <property type="entry name" value="Tyrosine-protein phosphatase non-receptor type 13"/>
    <property type="match status" value="1"/>
</dbReference>
<dbReference type="FunFam" id="1.20.80.10:FF:000011">
    <property type="entry name" value="Tyrosine-protein phosphatase non-receptor type 13"/>
    <property type="match status" value="1"/>
</dbReference>
<dbReference type="FunFam" id="2.30.29.30:FF:000107">
    <property type="entry name" value="Tyrosine-protein phosphatase non-receptor type 13"/>
    <property type="match status" value="1"/>
</dbReference>
<dbReference type="FunFam" id="2.30.42.10:FF:000084">
    <property type="entry name" value="Tyrosine-protein phosphatase non-receptor type 13"/>
    <property type="match status" value="1"/>
</dbReference>
<dbReference type="FunFam" id="2.30.42.10:FF:000086">
    <property type="entry name" value="Tyrosine-protein phosphatase non-receptor type 13"/>
    <property type="match status" value="1"/>
</dbReference>
<dbReference type="FunFam" id="2.30.42.10:FF:000105">
    <property type="entry name" value="Tyrosine-protein phosphatase non-receptor type 13"/>
    <property type="match status" value="1"/>
</dbReference>
<dbReference type="FunFam" id="2.30.42.10:FF:000129">
    <property type="entry name" value="Tyrosine-protein phosphatase non-receptor type 13"/>
    <property type="match status" value="1"/>
</dbReference>
<dbReference type="FunFam" id="2.30.42.10:FF:000174">
    <property type="entry name" value="Tyrosine-protein phosphatase non-receptor type 13"/>
    <property type="match status" value="1"/>
</dbReference>
<dbReference type="FunFam" id="3.10.20.90:FF:000082">
    <property type="entry name" value="Tyrosine-protein phosphatase non-receptor type 13"/>
    <property type="match status" value="1"/>
</dbReference>
<dbReference type="FunFam" id="3.90.190.10:FF:000034">
    <property type="entry name" value="Tyrosine-protein phosphatase non-receptor type 13"/>
    <property type="match status" value="1"/>
</dbReference>
<dbReference type="Gene3D" id="1.20.80.10">
    <property type="match status" value="1"/>
</dbReference>
<dbReference type="Gene3D" id="2.30.42.10">
    <property type="match status" value="5"/>
</dbReference>
<dbReference type="Gene3D" id="3.10.20.90">
    <property type="entry name" value="Phosphatidylinositol 3-kinase Catalytic Subunit, Chain A, domain 1"/>
    <property type="match status" value="1"/>
</dbReference>
<dbReference type="Gene3D" id="2.30.29.30">
    <property type="entry name" value="Pleckstrin-homology domain (PH domain)/Phosphotyrosine-binding domain (PTB)"/>
    <property type="match status" value="1"/>
</dbReference>
<dbReference type="Gene3D" id="3.90.190.10">
    <property type="entry name" value="Protein tyrosine phosphatase superfamily"/>
    <property type="match status" value="1"/>
</dbReference>
<dbReference type="Gene3D" id="1.10.510.10">
    <property type="entry name" value="Transferase(Phosphotransferase) domain 1"/>
    <property type="match status" value="1"/>
</dbReference>
<dbReference type="InterPro" id="IPR019749">
    <property type="entry name" value="Band_41_domain"/>
</dbReference>
<dbReference type="InterPro" id="IPR014352">
    <property type="entry name" value="FERM/acyl-CoA-bd_prot_sf"/>
</dbReference>
<dbReference type="InterPro" id="IPR035963">
    <property type="entry name" value="FERM_2"/>
</dbReference>
<dbReference type="InterPro" id="IPR019748">
    <property type="entry name" value="FERM_central"/>
</dbReference>
<dbReference type="InterPro" id="IPR000299">
    <property type="entry name" value="FERM_domain"/>
</dbReference>
<dbReference type="InterPro" id="IPR018979">
    <property type="entry name" value="FERM_N"/>
</dbReference>
<dbReference type="InterPro" id="IPR018980">
    <property type="entry name" value="FERM_PH-like_C"/>
</dbReference>
<dbReference type="InterPro" id="IPR011019">
    <property type="entry name" value="KIND_dom"/>
</dbReference>
<dbReference type="InterPro" id="IPR052074">
    <property type="entry name" value="NonRcpt_TyrProt_Phosphatase"/>
</dbReference>
<dbReference type="InterPro" id="IPR001478">
    <property type="entry name" value="PDZ"/>
</dbReference>
<dbReference type="InterPro" id="IPR036034">
    <property type="entry name" value="PDZ_sf"/>
</dbReference>
<dbReference type="InterPro" id="IPR011993">
    <property type="entry name" value="PH-like_dom_sf"/>
</dbReference>
<dbReference type="InterPro" id="IPR029021">
    <property type="entry name" value="Prot-tyrosine_phosphatase-like"/>
</dbReference>
<dbReference type="InterPro" id="IPR000242">
    <property type="entry name" value="PTP_cat"/>
</dbReference>
<dbReference type="InterPro" id="IPR012153">
    <property type="entry name" value="PTPN13"/>
</dbReference>
<dbReference type="InterPro" id="IPR003595">
    <property type="entry name" value="Tyr_Pase_cat"/>
</dbReference>
<dbReference type="InterPro" id="IPR000387">
    <property type="entry name" value="Tyr_Pase_dom"/>
</dbReference>
<dbReference type="InterPro" id="IPR029071">
    <property type="entry name" value="Ubiquitin-like_domsf"/>
</dbReference>
<dbReference type="PANTHER" id="PTHR46900">
    <property type="entry name" value="TYROSINE-PROTEIN PHOSPHATASE NON-RECEPTOR TYPE 13"/>
    <property type="match status" value="1"/>
</dbReference>
<dbReference type="PANTHER" id="PTHR46900:SF1">
    <property type="entry name" value="TYROSINE-PROTEIN PHOSPHATASE NON-RECEPTOR TYPE 13"/>
    <property type="match status" value="1"/>
</dbReference>
<dbReference type="Pfam" id="PF09380">
    <property type="entry name" value="FERM_C"/>
    <property type="match status" value="1"/>
</dbReference>
<dbReference type="Pfam" id="PF00373">
    <property type="entry name" value="FERM_M"/>
    <property type="match status" value="1"/>
</dbReference>
<dbReference type="Pfam" id="PF09379">
    <property type="entry name" value="FERM_N"/>
    <property type="match status" value="1"/>
</dbReference>
<dbReference type="Pfam" id="PF00595">
    <property type="entry name" value="PDZ"/>
    <property type="match status" value="5"/>
</dbReference>
<dbReference type="Pfam" id="PF16599">
    <property type="entry name" value="PTN13_u3"/>
    <property type="match status" value="1"/>
</dbReference>
<dbReference type="Pfam" id="PF00102">
    <property type="entry name" value="Y_phosphatase"/>
    <property type="match status" value="1"/>
</dbReference>
<dbReference type="PIRSF" id="PIRSF000933">
    <property type="entry name" value="Tyr-Ptase_nr13"/>
    <property type="match status" value="1"/>
</dbReference>
<dbReference type="PRINTS" id="PR00935">
    <property type="entry name" value="BAND41"/>
</dbReference>
<dbReference type="PRINTS" id="PR00700">
    <property type="entry name" value="PRTYPHPHTASE"/>
</dbReference>
<dbReference type="SMART" id="SM00295">
    <property type="entry name" value="B41"/>
    <property type="match status" value="1"/>
</dbReference>
<dbReference type="SMART" id="SM01196">
    <property type="entry name" value="FERM_C"/>
    <property type="match status" value="1"/>
</dbReference>
<dbReference type="SMART" id="SM00750">
    <property type="entry name" value="KIND"/>
    <property type="match status" value="1"/>
</dbReference>
<dbReference type="SMART" id="SM00228">
    <property type="entry name" value="PDZ"/>
    <property type="match status" value="5"/>
</dbReference>
<dbReference type="SMART" id="SM00194">
    <property type="entry name" value="PTPc"/>
    <property type="match status" value="1"/>
</dbReference>
<dbReference type="SMART" id="SM00404">
    <property type="entry name" value="PTPc_motif"/>
    <property type="match status" value="1"/>
</dbReference>
<dbReference type="SUPFAM" id="SSF52799">
    <property type="entry name" value="(Phosphotyrosine protein) phosphatases II"/>
    <property type="match status" value="1"/>
</dbReference>
<dbReference type="SUPFAM" id="SSF50156">
    <property type="entry name" value="PDZ domain-like"/>
    <property type="match status" value="5"/>
</dbReference>
<dbReference type="SUPFAM" id="SSF50729">
    <property type="entry name" value="PH domain-like"/>
    <property type="match status" value="1"/>
</dbReference>
<dbReference type="SUPFAM" id="SSF47031">
    <property type="entry name" value="Second domain of FERM"/>
    <property type="match status" value="1"/>
</dbReference>
<dbReference type="SUPFAM" id="SSF54236">
    <property type="entry name" value="Ubiquitin-like"/>
    <property type="match status" value="1"/>
</dbReference>
<dbReference type="PROSITE" id="PS50057">
    <property type="entry name" value="FERM_3"/>
    <property type="match status" value="1"/>
</dbReference>
<dbReference type="PROSITE" id="PS51377">
    <property type="entry name" value="KIND"/>
    <property type="match status" value="1"/>
</dbReference>
<dbReference type="PROSITE" id="PS50106">
    <property type="entry name" value="PDZ"/>
    <property type="match status" value="5"/>
</dbReference>
<dbReference type="PROSITE" id="PS50056">
    <property type="entry name" value="TYR_PHOSPHATASE_2"/>
    <property type="match status" value="1"/>
</dbReference>
<dbReference type="PROSITE" id="PS50055">
    <property type="entry name" value="TYR_PHOSPHATASE_PTP"/>
    <property type="match status" value="1"/>
</dbReference>
<protein>
    <recommendedName>
        <fullName>Tyrosine-protein phosphatase non-receptor type 13</fullName>
        <ecNumber evidence="2">3.1.3.48</ecNumber>
    </recommendedName>
    <alternativeName>
        <fullName>PTP36</fullName>
    </alternativeName>
    <alternativeName>
        <fullName>Protein tyrosine phosphatase DPZPTP</fullName>
    </alternativeName>
    <alternativeName>
        <fullName>Protein tyrosine phosphatase PTP-BL</fullName>
    </alternativeName>
    <alternativeName>
        <fullName>Protein-tyrosine phosphatase RIP</fullName>
    </alternativeName>
</protein>
<keyword id="KW-0002">3D-structure</keyword>
<keyword id="KW-0966">Cell projection</keyword>
<keyword id="KW-0175">Coiled coil</keyword>
<keyword id="KW-0963">Cytoplasm</keyword>
<keyword id="KW-0206">Cytoskeleton</keyword>
<keyword id="KW-0378">Hydrolase</keyword>
<keyword id="KW-0539">Nucleus</keyword>
<keyword id="KW-0597">Phosphoprotein</keyword>
<keyword id="KW-0904">Protein phosphatase</keyword>
<keyword id="KW-1185">Reference proteome</keyword>
<keyword id="KW-0677">Repeat</keyword>
<proteinExistence type="evidence at protein level"/>
<name>PTN13_MOUSE</name>